<accession>Q8E1K3</accession>
<name>FABZ_STRA5</name>
<evidence type="ECO:0000255" key="1">
    <source>
        <dbReference type="HAMAP-Rule" id="MF_00406"/>
    </source>
</evidence>
<keyword id="KW-0963">Cytoplasm</keyword>
<keyword id="KW-0441">Lipid A biosynthesis</keyword>
<keyword id="KW-0444">Lipid biosynthesis</keyword>
<keyword id="KW-0443">Lipid metabolism</keyword>
<keyword id="KW-0456">Lyase</keyword>
<keyword id="KW-1185">Reference proteome</keyword>
<comment type="function">
    <text evidence="1">Involved in unsaturated fatty acids biosynthesis. Catalyzes the dehydration of short chain beta-hydroxyacyl-ACPs and long chain saturated and unsaturated beta-hydroxyacyl-ACPs.</text>
</comment>
<comment type="catalytic activity">
    <reaction evidence="1">
        <text>a (3R)-hydroxyacyl-[ACP] = a (2E)-enoyl-[ACP] + H2O</text>
        <dbReference type="Rhea" id="RHEA:13097"/>
        <dbReference type="Rhea" id="RHEA-COMP:9925"/>
        <dbReference type="Rhea" id="RHEA-COMP:9945"/>
        <dbReference type="ChEBI" id="CHEBI:15377"/>
        <dbReference type="ChEBI" id="CHEBI:78784"/>
        <dbReference type="ChEBI" id="CHEBI:78827"/>
        <dbReference type="EC" id="4.2.1.59"/>
    </reaction>
</comment>
<comment type="subcellular location">
    <subcellularLocation>
        <location evidence="1">Cytoplasm</location>
    </subcellularLocation>
</comment>
<comment type="similarity">
    <text evidence="1">Belongs to the thioester dehydratase family. FabZ subfamily.</text>
</comment>
<reference key="1">
    <citation type="journal article" date="2002" name="Proc. Natl. Acad. Sci. U.S.A.">
        <title>Complete genome sequence and comparative genomic analysis of an emerging human pathogen, serotype V Streptococcus agalactiae.</title>
        <authorList>
            <person name="Tettelin H."/>
            <person name="Masignani V."/>
            <person name="Cieslewicz M.J."/>
            <person name="Eisen J.A."/>
            <person name="Peterson S.N."/>
            <person name="Wessels M.R."/>
            <person name="Paulsen I.T."/>
            <person name="Nelson K.E."/>
            <person name="Margarit I."/>
            <person name="Read T.D."/>
            <person name="Madoff L.C."/>
            <person name="Wolf A.M."/>
            <person name="Beanan M.J."/>
            <person name="Brinkac L.M."/>
            <person name="Daugherty S.C."/>
            <person name="DeBoy R.T."/>
            <person name="Durkin A.S."/>
            <person name="Kolonay J.F."/>
            <person name="Madupu R."/>
            <person name="Lewis M.R."/>
            <person name="Radune D."/>
            <person name="Fedorova N.B."/>
            <person name="Scanlan D."/>
            <person name="Khouri H.M."/>
            <person name="Mulligan S."/>
            <person name="Carty H.A."/>
            <person name="Cline R.T."/>
            <person name="Van Aken S.E."/>
            <person name="Gill J."/>
            <person name="Scarselli M."/>
            <person name="Mora M."/>
            <person name="Iacobini E.T."/>
            <person name="Brettoni C."/>
            <person name="Galli G."/>
            <person name="Mariani M."/>
            <person name="Vegni F."/>
            <person name="Maione D."/>
            <person name="Rinaudo D."/>
            <person name="Rappuoli R."/>
            <person name="Telford J.L."/>
            <person name="Kasper D.L."/>
            <person name="Grandi G."/>
            <person name="Fraser C.M."/>
        </authorList>
    </citation>
    <scope>NUCLEOTIDE SEQUENCE [LARGE SCALE GENOMIC DNA]</scope>
    <source>
        <strain>ATCC BAA-611 / 2603 V/R</strain>
    </source>
</reference>
<feature type="chain" id="PRO_0000091739" description="3-hydroxyacyl-[acyl-carrier-protein] dehydratase FabZ">
    <location>
        <begin position="1"/>
        <end position="140"/>
    </location>
</feature>
<feature type="active site" evidence="1">
    <location>
        <position position="47"/>
    </location>
</feature>
<proteinExistence type="inferred from homology"/>
<protein>
    <recommendedName>
        <fullName evidence="1">3-hydroxyacyl-[acyl-carrier-protein] dehydratase FabZ</fullName>
        <ecNumber evidence="1">4.2.1.59</ecNumber>
    </recommendedName>
    <alternativeName>
        <fullName evidence="1">(3R)-hydroxymyristoyl-[acyl-carrier-protein] dehydratase</fullName>
        <shortName evidence="1">(3R)-hydroxymyristoyl-ACP dehydrase</shortName>
    </alternativeName>
    <alternativeName>
        <fullName evidence="1">Beta-hydroxyacyl-ACP dehydratase</fullName>
    </alternativeName>
</protein>
<sequence length="140" mass="15445">MIDIKEIREALPHRYPMLLVDRVLEVSEDEIVAIKNVSINEPFFNGHFPEYPVMPGVLIMEALAQTAGVLELSKEENKGKLVFYAGMDKVKFKKQVVPGDQLVMTAKFVKRRGTIAVVEAIAEVDGKLAASGTLTFAIGN</sequence>
<organism>
    <name type="scientific">Streptococcus agalactiae serotype V (strain ATCC BAA-611 / 2603 V/R)</name>
    <dbReference type="NCBI Taxonomy" id="208435"/>
    <lineage>
        <taxon>Bacteria</taxon>
        <taxon>Bacillati</taxon>
        <taxon>Bacillota</taxon>
        <taxon>Bacilli</taxon>
        <taxon>Lactobacillales</taxon>
        <taxon>Streptococcaceae</taxon>
        <taxon>Streptococcus</taxon>
    </lineage>
</organism>
<gene>
    <name evidence="1" type="primary">fabZ</name>
    <name type="ordered locus">SAG0351</name>
</gene>
<dbReference type="EC" id="4.2.1.59" evidence="1"/>
<dbReference type="EMBL" id="AE009948">
    <property type="protein sequence ID" value="AAM99257.1"/>
    <property type="molecule type" value="Genomic_DNA"/>
</dbReference>
<dbReference type="RefSeq" id="NP_687385.1">
    <property type="nucleotide sequence ID" value="NC_004116.1"/>
</dbReference>
<dbReference type="RefSeq" id="WP_000565430.1">
    <property type="nucleotide sequence ID" value="NC_004116.1"/>
</dbReference>
<dbReference type="SMR" id="Q8E1K3"/>
<dbReference type="STRING" id="208435.SAG0351"/>
<dbReference type="GeneID" id="66885326"/>
<dbReference type="KEGG" id="sag:SAG0351"/>
<dbReference type="PATRIC" id="fig|208435.3.peg.346"/>
<dbReference type="HOGENOM" id="CLU_078912_1_2_9"/>
<dbReference type="OrthoDB" id="9772788at2"/>
<dbReference type="Proteomes" id="UP000000821">
    <property type="component" value="Chromosome"/>
</dbReference>
<dbReference type="GO" id="GO:0005737">
    <property type="term" value="C:cytoplasm"/>
    <property type="evidence" value="ECO:0007669"/>
    <property type="project" value="UniProtKB-SubCell"/>
</dbReference>
<dbReference type="GO" id="GO:0016020">
    <property type="term" value="C:membrane"/>
    <property type="evidence" value="ECO:0007669"/>
    <property type="project" value="GOC"/>
</dbReference>
<dbReference type="GO" id="GO:0019171">
    <property type="term" value="F:(3R)-hydroxyacyl-[acyl-carrier-protein] dehydratase activity"/>
    <property type="evidence" value="ECO:0007669"/>
    <property type="project" value="UniProtKB-EC"/>
</dbReference>
<dbReference type="GO" id="GO:0006633">
    <property type="term" value="P:fatty acid biosynthetic process"/>
    <property type="evidence" value="ECO:0007669"/>
    <property type="project" value="UniProtKB-UniRule"/>
</dbReference>
<dbReference type="GO" id="GO:0009245">
    <property type="term" value="P:lipid A biosynthetic process"/>
    <property type="evidence" value="ECO:0007669"/>
    <property type="project" value="UniProtKB-UniRule"/>
</dbReference>
<dbReference type="CDD" id="cd01288">
    <property type="entry name" value="FabZ"/>
    <property type="match status" value="1"/>
</dbReference>
<dbReference type="FunFam" id="3.10.129.10:FF:000001">
    <property type="entry name" value="3-hydroxyacyl-[acyl-carrier-protein] dehydratase FabZ"/>
    <property type="match status" value="1"/>
</dbReference>
<dbReference type="Gene3D" id="3.10.129.10">
    <property type="entry name" value="Hotdog Thioesterase"/>
    <property type="match status" value="1"/>
</dbReference>
<dbReference type="HAMAP" id="MF_00406">
    <property type="entry name" value="FabZ"/>
    <property type="match status" value="1"/>
</dbReference>
<dbReference type="InterPro" id="IPR013114">
    <property type="entry name" value="FabA_FabZ"/>
</dbReference>
<dbReference type="InterPro" id="IPR010084">
    <property type="entry name" value="FabZ"/>
</dbReference>
<dbReference type="InterPro" id="IPR029069">
    <property type="entry name" value="HotDog_dom_sf"/>
</dbReference>
<dbReference type="NCBIfam" id="TIGR01750">
    <property type="entry name" value="fabZ"/>
    <property type="match status" value="1"/>
</dbReference>
<dbReference type="NCBIfam" id="NF000582">
    <property type="entry name" value="PRK00006.1"/>
    <property type="match status" value="1"/>
</dbReference>
<dbReference type="PANTHER" id="PTHR30272">
    <property type="entry name" value="3-HYDROXYACYL-[ACYL-CARRIER-PROTEIN] DEHYDRATASE"/>
    <property type="match status" value="1"/>
</dbReference>
<dbReference type="PANTHER" id="PTHR30272:SF1">
    <property type="entry name" value="3-HYDROXYACYL-[ACYL-CARRIER-PROTEIN] DEHYDRATASE"/>
    <property type="match status" value="1"/>
</dbReference>
<dbReference type="Pfam" id="PF07977">
    <property type="entry name" value="FabA"/>
    <property type="match status" value="1"/>
</dbReference>
<dbReference type="SUPFAM" id="SSF54637">
    <property type="entry name" value="Thioesterase/thiol ester dehydrase-isomerase"/>
    <property type="match status" value="1"/>
</dbReference>